<sequence length="131" mass="15287">MPLYEHVLIARQDLSNAQAEGLIEHFSTVIADNGGKVVDNEYWGVRTLAYKINKNRKGHYAYLRSDAPSAAVQEMERLARLHDDVMRVLTVRVDEHKDGPSVQMQKRDERERGDRGDRGERRERRDRDDRN</sequence>
<evidence type="ECO:0000255" key="1">
    <source>
        <dbReference type="HAMAP-Rule" id="MF_00360"/>
    </source>
</evidence>
<evidence type="ECO:0000256" key="2">
    <source>
        <dbReference type="SAM" id="MobiDB-lite"/>
    </source>
</evidence>
<evidence type="ECO:0000305" key="3"/>
<keyword id="KW-1185">Reference proteome</keyword>
<keyword id="KW-0687">Ribonucleoprotein</keyword>
<keyword id="KW-0689">Ribosomal protein</keyword>
<keyword id="KW-0694">RNA-binding</keyword>
<keyword id="KW-0699">rRNA-binding</keyword>
<feature type="chain" id="PRO_1000005309" description="Small ribosomal subunit protein bS6">
    <location>
        <begin position="1"/>
        <end position="131"/>
    </location>
</feature>
<feature type="region of interest" description="Disordered" evidence="2">
    <location>
        <begin position="92"/>
        <end position="131"/>
    </location>
</feature>
<protein>
    <recommendedName>
        <fullName evidence="1">Small ribosomal subunit protein bS6</fullName>
    </recommendedName>
    <alternativeName>
        <fullName evidence="3">30S ribosomal protein S6</fullName>
    </alternativeName>
</protein>
<dbReference type="EMBL" id="CP000489">
    <property type="protein sequence ID" value="ABL69002.1"/>
    <property type="molecule type" value="Genomic_DNA"/>
</dbReference>
<dbReference type="RefSeq" id="WP_011747230.1">
    <property type="nucleotide sequence ID" value="NC_008686.1"/>
</dbReference>
<dbReference type="SMR" id="A1B0F8"/>
<dbReference type="STRING" id="318586.Pden_0891"/>
<dbReference type="EnsemblBacteria" id="ABL69002">
    <property type="protein sequence ID" value="ABL69002"/>
    <property type="gene ID" value="Pden_0891"/>
</dbReference>
<dbReference type="GeneID" id="93452113"/>
<dbReference type="KEGG" id="pde:Pden_0891"/>
<dbReference type="eggNOG" id="COG0360">
    <property type="taxonomic scope" value="Bacteria"/>
</dbReference>
<dbReference type="HOGENOM" id="CLU_113441_2_0_5"/>
<dbReference type="OrthoDB" id="9812702at2"/>
<dbReference type="Proteomes" id="UP000000361">
    <property type="component" value="Chromosome 1"/>
</dbReference>
<dbReference type="GO" id="GO:0022627">
    <property type="term" value="C:cytosolic small ribosomal subunit"/>
    <property type="evidence" value="ECO:0007669"/>
    <property type="project" value="TreeGrafter"/>
</dbReference>
<dbReference type="GO" id="GO:0070181">
    <property type="term" value="F:small ribosomal subunit rRNA binding"/>
    <property type="evidence" value="ECO:0007669"/>
    <property type="project" value="TreeGrafter"/>
</dbReference>
<dbReference type="GO" id="GO:0003735">
    <property type="term" value="F:structural constituent of ribosome"/>
    <property type="evidence" value="ECO:0007669"/>
    <property type="project" value="InterPro"/>
</dbReference>
<dbReference type="GO" id="GO:0006412">
    <property type="term" value="P:translation"/>
    <property type="evidence" value="ECO:0007669"/>
    <property type="project" value="UniProtKB-UniRule"/>
</dbReference>
<dbReference type="CDD" id="cd00473">
    <property type="entry name" value="bS6"/>
    <property type="match status" value="1"/>
</dbReference>
<dbReference type="Gene3D" id="3.30.70.60">
    <property type="match status" value="1"/>
</dbReference>
<dbReference type="HAMAP" id="MF_00360">
    <property type="entry name" value="Ribosomal_bS6"/>
    <property type="match status" value="1"/>
</dbReference>
<dbReference type="InterPro" id="IPR000529">
    <property type="entry name" value="Ribosomal_bS6"/>
</dbReference>
<dbReference type="InterPro" id="IPR035980">
    <property type="entry name" value="Ribosomal_bS6_sf"/>
</dbReference>
<dbReference type="InterPro" id="IPR020814">
    <property type="entry name" value="Ribosomal_S6_plastid/chlpt"/>
</dbReference>
<dbReference type="InterPro" id="IPR014717">
    <property type="entry name" value="Transl_elong_EF1B/ribsomal_bS6"/>
</dbReference>
<dbReference type="NCBIfam" id="TIGR00166">
    <property type="entry name" value="S6"/>
    <property type="match status" value="1"/>
</dbReference>
<dbReference type="PANTHER" id="PTHR21011">
    <property type="entry name" value="MITOCHONDRIAL 28S RIBOSOMAL PROTEIN S6"/>
    <property type="match status" value="1"/>
</dbReference>
<dbReference type="PANTHER" id="PTHR21011:SF1">
    <property type="entry name" value="SMALL RIBOSOMAL SUBUNIT PROTEIN BS6M"/>
    <property type="match status" value="1"/>
</dbReference>
<dbReference type="Pfam" id="PF01250">
    <property type="entry name" value="Ribosomal_S6"/>
    <property type="match status" value="1"/>
</dbReference>
<dbReference type="SUPFAM" id="SSF54995">
    <property type="entry name" value="Ribosomal protein S6"/>
    <property type="match status" value="1"/>
</dbReference>
<reference key="1">
    <citation type="submission" date="2006-12" db="EMBL/GenBank/DDBJ databases">
        <title>Complete sequence of chromosome 1 of Paracoccus denitrificans PD1222.</title>
        <authorList>
            <person name="Copeland A."/>
            <person name="Lucas S."/>
            <person name="Lapidus A."/>
            <person name="Barry K."/>
            <person name="Detter J.C."/>
            <person name="Glavina del Rio T."/>
            <person name="Hammon N."/>
            <person name="Israni S."/>
            <person name="Dalin E."/>
            <person name="Tice H."/>
            <person name="Pitluck S."/>
            <person name="Munk A.C."/>
            <person name="Brettin T."/>
            <person name="Bruce D."/>
            <person name="Han C."/>
            <person name="Tapia R."/>
            <person name="Gilna P."/>
            <person name="Schmutz J."/>
            <person name="Larimer F."/>
            <person name="Land M."/>
            <person name="Hauser L."/>
            <person name="Kyrpides N."/>
            <person name="Lykidis A."/>
            <person name="Spiro S."/>
            <person name="Richardson D.J."/>
            <person name="Moir J.W.B."/>
            <person name="Ferguson S.J."/>
            <person name="van Spanning R.J.M."/>
            <person name="Richardson P."/>
        </authorList>
    </citation>
    <scope>NUCLEOTIDE SEQUENCE [LARGE SCALE GENOMIC DNA]</scope>
    <source>
        <strain>Pd 1222</strain>
    </source>
</reference>
<proteinExistence type="inferred from homology"/>
<name>RS6_PARDP</name>
<organism>
    <name type="scientific">Paracoccus denitrificans (strain Pd 1222)</name>
    <dbReference type="NCBI Taxonomy" id="318586"/>
    <lineage>
        <taxon>Bacteria</taxon>
        <taxon>Pseudomonadati</taxon>
        <taxon>Pseudomonadota</taxon>
        <taxon>Alphaproteobacteria</taxon>
        <taxon>Rhodobacterales</taxon>
        <taxon>Paracoccaceae</taxon>
        <taxon>Paracoccus</taxon>
    </lineage>
</organism>
<gene>
    <name evidence="1" type="primary">rpsF</name>
    <name type="ordered locus">Pden_0891</name>
</gene>
<comment type="function">
    <text evidence="1">Binds together with bS18 to 16S ribosomal RNA.</text>
</comment>
<comment type="similarity">
    <text evidence="1">Belongs to the bacterial ribosomal protein bS6 family.</text>
</comment>
<accession>A1B0F8</accession>